<reference key="1">
    <citation type="journal article" date="2004" name="Science">
        <title>The 1.2-megabase genome sequence of Mimivirus.</title>
        <authorList>
            <person name="Raoult D."/>
            <person name="Audic S."/>
            <person name="Robert C."/>
            <person name="Abergel C."/>
            <person name="Renesto P."/>
            <person name="Ogata H."/>
            <person name="La Scola B."/>
            <person name="Susan M."/>
            <person name="Claverie J.-M."/>
        </authorList>
    </citation>
    <scope>NUCLEOTIDE SEQUENCE [LARGE SCALE GENOMIC DNA]</scope>
    <source>
        <strain>Rowbotham-Bradford</strain>
    </source>
</reference>
<gene>
    <name type="ordered locus">MIMI_L291</name>
</gene>
<protein>
    <recommendedName>
        <fullName>Uncharacterized protein L291</fullName>
    </recommendedName>
</protein>
<keyword id="KW-1185">Reference proteome</keyword>
<evidence type="ECO:0000256" key="1">
    <source>
        <dbReference type="SAM" id="MobiDB-lite"/>
    </source>
</evidence>
<dbReference type="EMBL" id="AY653733">
    <property type="protein sequence ID" value="AAV50563.1"/>
    <property type="molecule type" value="Genomic_DNA"/>
</dbReference>
<dbReference type="KEGG" id="vg:9924906"/>
<dbReference type="Proteomes" id="UP000001134">
    <property type="component" value="Genome"/>
</dbReference>
<feature type="chain" id="PRO_0000253208" description="Uncharacterized protein L291">
    <location>
        <begin position="1"/>
        <end position="595"/>
    </location>
</feature>
<feature type="region of interest" description="Disordered" evidence="1">
    <location>
        <begin position="50"/>
        <end position="159"/>
    </location>
</feature>
<feature type="region of interest" description="Disordered" evidence="1">
    <location>
        <begin position="398"/>
        <end position="430"/>
    </location>
</feature>
<feature type="region of interest" description="Disordered" evidence="1">
    <location>
        <begin position="450"/>
        <end position="595"/>
    </location>
</feature>
<feature type="compositionally biased region" description="Low complexity" evidence="1">
    <location>
        <begin position="83"/>
        <end position="122"/>
    </location>
</feature>
<feature type="compositionally biased region" description="Basic and acidic residues" evidence="1">
    <location>
        <begin position="123"/>
        <end position="132"/>
    </location>
</feature>
<feature type="compositionally biased region" description="Acidic residues" evidence="1">
    <location>
        <begin position="137"/>
        <end position="146"/>
    </location>
</feature>
<feature type="compositionally biased region" description="Low complexity" evidence="1">
    <location>
        <begin position="398"/>
        <end position="409"/>
    </location>
</feature>
<feature type="compositionally biased region" description="Pro residues" evidence="1">
    <location>
        <begin position="410"/>
        <end position="420"/>
    </location>
</feature>
<feature type="compositionally biased region" description="Low complexity" evidence="1">
    <location>
        <begin position="421"/>
        <end position="430"/>
    </location>
</feature>
<feature type="compositionally biased region" description="Basic and acidic residues" evidence="1">
    <location>
        <begin position="454"/>
        <end position="463"/>
    </location>
</feature>
<feature type="compositionally biased region" description="Pro residues" evidence="1">
    <location>
        <begin position="467"/>
        <end position="476"/>
    </location>
</feature>
<feature type="compositionally biased region" description="Low complexity" evidence="1">
    <location>
        <begin position="477"/>
        <end position="529"/>
    </location>
</feature>
<feature type="compositionally biased region" description="Basic and acidic residues" evidence="1">
    <location>
        <begin position="530"/>
        <end position="542"/>
    </location>
</feature>
<feature type="compositionally biased region" description="Acidic residues" evidence="1">
    <location>
        <begin position="544"/>
        <end position="553"/>
    </location>
</feature>
<feature type="compositionally biased region" description="Basic residues" evidence="1">
    <location>
        <begin position="559"/>
        <end position="570"/>
    </location>
</feature>
<feature type="compositionally biased region" description="Low complexity" evidence="1">
    <location>
        <begin position="571"/>
        <end position="580"/>
    </location>
</feature>
<feature type="compositionally biased region" description="Basic residues" evidence="1">
    <location>
        <begin position="581"/>
        <end position="595"/>
    </location>
</feature>
<organism>
    <name type="scientific">Acanthamoeba polyphaga mimivirus</name>
    <name type="common">APMV</name>
    <dbReference type="NCBI Taxonomy" id="212035"/>
    <lineage>
        <taxon>Viruses</taxon>
        <taxon>Varidnaviria</taxon>
        <taxon>Bamfordvirae</taxon>
        <taxon>Nucleocytoviricota</taxon>
        <taxon>Megaviricetes</taxon>
        <taxon>Imitervirales</taxon>
        <taxon>Mimiviridae</taxon>
        <taxon>Megamimivirinae</taxon>
        <taxon>Mimivirus</taxon>
        <taxon>Mimivirus bradfordmassiliense</taxon>
    </lineage>
</organism>
<proteinExistence type="predicted"/>
<accession>Q5UPW9</accession>
<organismHost>
    <name type="scientific">Acanthamoeba polyphaga</name>
    <name type="common">Amoeba</name>
    <dbReference type="NCBI Taxonomy" id="5757"/>
</organismHost>
<sequence length="595" mass="67056">MANNYKDLFIDIDSFDETNIIYVKPLLFFEASRHMGIYYEKEIIMKKPVVNPSNKSNKSKKLNKTNKSNKSNKSDELKKSNKSNKSSALKKSNKSSNKSSNKSSNKSSNKSSNKSSNKSSNKFPDKSDKSDSSNDSDNSDDSDDSSNDSSEFETIKTKKKQKIIIKTPKMIVPFGVKEFDNNGRKNYQMSLSFSTMTNLYNEEEIKKFHGFIKLTDKINEETIMDYKDTWKLPKGLKYKRSLQRLSKDYPHHININMPHDEKMGFMFNVYDEKGGKSKPDIIDKRSIVSAIIELTDLKFTDTEFRANWTLLQVRKFKPYSPIQEFFMTECFICDEDNPEDTVYSKLIEKYQQTLKTPITFPQYPQMNPSHSSSGYAIPYITPYQSNYPIPYPPTYPTTYPTTPLFSEPTIPKPPQQPTTEPPSGFKPPSLSELLSAKKLLKPTKTTVKGVTEGKVVESDDHTSVADIPPPPPPPPSISSDNSSPNKSVKSSTKSSTKSSTKSSTKSSTKSSTKSPSKTPVKSPIKSSSKLSDKKSPTKKIESSGESDSESDSESDSKTTKKSTNKIKKITNNKLENSNTKNNKKFSKKKTISLDK</sequence>
<name>YL291_MIMIV</name>